<comment type="function">
    <text evidence="1">Catalyzes the transfer of the diacylglyceryl group from phosphatidylglycerol to the sulfhydryl group of the N-terminal cysteine of a prolipoprotein, the first step in the formation of mature lipoproteins.</text>
</comment>
<comment type="catalytic activity">
    <reaction evidence="1">
        <text>L-cysteinyl-[prolipoprotein] + a 1,2-diacyl-sn-glycero-3-phospho-(1'-sn-glycerol) = an S-1,2-diacyl-sn-glyceryl-L-cysteinyl-[prolipoprotein] + sn-glycerol 1-phosphate + H(+)</text>
        <dbReference type="Rhea" id="RHEA:56712"/>
        <dbReference type="Rhea" id="RHEA-COMP:14679"/>
        <dbReference type="Rhea" id="RHEA-COMP:14680"/>
        <dbReference type="ChEBI" id="CHEBI:15378"/>
        <dbReference type="ChEBI" id="CHEBI:29950"/>
        <dbReference type="ChEBI" id="CHEBI:57685"/>
        <dbReference type="ChEBI" id="CHEBI:64716"/>
        <dbReference type="ChEBI" id="CHEBI:140658"/>
        <dbReference type="EC" id="2.5.1.145"/>
    </reaction>
</comment>
<comment type="pathway">
    <text evidence="1">Protein modification; lipoprotein biosynthesis (diacylglyceryl transfer).</text>
</comment>
<comment type="subcellular location">
    <subcellularLocation>
        <location evidence="1">Cell inner membrane</location>
        <topology evidence="1">Multi-pass membrane protein</topology>
    </subcellularLocation>
</comment>
<comment type="similarity">
    <text evidence="1">Belongs to the Lgt family.</text>
</comment>
<sequence>MEFWQHIYSNFNVIAFSIFGLKVHWYGIMYVIALLLALLLAKFFVRKFQLDINEKHLDSYFIWVEIGVILGARLGYILIYDANTMYYITHPWQIFNPYINGEFVGIRGMSYHGAIIGFLIATLLFCKKYKANPWIFLDLVALSVPLAYVFGRIGNFLNQELFGRITNVPWGIYVDGVLRHPSQLYEAFLEGIVVFIIVYLARFKQSFQGELILVYAGAYSLARFICEFYREPDFGIGFVLWGMSMGQILSFIMFITALLVYICIKFKKVNI</sequence>
<reference key="1">
    <citation type="journal article" date="2005" name="PLoS Biol.">
        <title>Major structural differences and novel potential virulence mechanisms from the genomes of multiple Campylobacter species.</title>
        <authorList>
            <person name="Fouts D.E."/>
            <person name="Mongodin E.F."/>
            <person name="Mandrell R.E."/>
            <person name="Miller W.G."/>
            <person name="Rasko D.A."/>
            <person name="Ravel J."/>
            <person name="Brinkac L.M."/>
            <person name="DeBoy R.T."/>
            <person name="Parker C.T."/>
            <person name="Daugherty S.C."/>
            <person name="Dodson R.J."/>
            <person name="Durkin A.S."/>
            <person name="Madupu R."/>
            <person name="Sullivan S.A."/>
            <person name="Shetty J.U."/>
            <person name="Ayodeji M.A."/>
            <person name="Shvartsbeyn A."/>
            <person name="Schatz M.C."/>
            <person name="Badger J.H."/>
            <person name="Fraser C.M."/>
            <person name="Nelson K.E."/>
        </authorList>
    </citation>
    <scope>NUCLEOTIDE SEQUENCE [LARGE SCALE GENOMIC DNA]</scope>
    <source>
        <strain>RM1221</strain>
    </source>
</reference>
<feature type="chain" id="PRO_0000172576" description="Phosphatidylglycerol--prolipoprotein diacylglyceryl transferase">
    <location>
        <begin position="1"/>
        <end position="271"/>
    </location>
</feature>
<feature type="transmembrane region" description="Helical" evidence="1">
    <location>
        <begin position="25"/>
        <end position="45"/>
    </location>
</feature>
<feature type="transmembrane region" description="Helical" evidence="1">
    <location>
        <begin position="60"/>
        <end position="80"/>
    </location>
</feature>
<feature type="transmembrane region" description="Helical" evidence="1">
    <location>
        <begin position="103"/>
        <end position="123"/>
    </location>
</feature>
<feature type="transmembrane region" description="Helical" evidence="1">
    <location>
        <begin position="131"/>
        <end position="151"/>
    </location>
</feature>
<feature type="transmembrane region" description="Helical" evidence="1">
    <location>
        <begin position="181"/>
        <end position="201"/>
    </location>
</feature>
<feature type="transmembrane region" description="Helical" evidence="1">
    <location>
        <begin position="209"/>
        <end position="229"/>
    </location>
</feature>
<feature type="transmembrane region" description="Helical" evidence="1">
    <location>
        <begin position="235"/>
        <end position="255"/>
    </location>
</feature>
<feature type="binding site" evidence="1">
    <location>
        <position position="152"/>
    </location>
    <ligand>
        <name>a 1,2-diacyl-sn-glycero-3-phospho-(1'-sn-glycerol)</name>
        <dbReference type="ChEBI" id="CHEBI:64716"/>
    </ligand>
</feature>
<name>LGT_CAMJR</name>
<keyword id="KW-0997">Cell inner membrane</keyword>
<keyword id="KW-1003">Cell membrane</keyword>
<keyword id="KW-0472">Membrane</keyword>
<keyword id="KW-0808">Transferase</keyword>
<keyword id="KW-0812">Transmembrane</keyword>
<keyword id="KW-1133">Transmembrane helix</keyword>
<accession>Q5HW60</accession>
<evidence type="ECO:0000255" key="1">
    <source>
        <dbReference type="HAMAP-Rule" id="MF_01147"/>
    </source>
</evidence>
<protein>
    <recommendedName>
        <fullName evidence="1">Phosphatidylglycerol--prolipoprotein diacylglyceryl transferase</fullName>
        <ecNumber evidence="1">2.5.1.145</ecNumber>
    </recommendedName>
</protein>
<dbReference type="EC" id="2.5.1.145" evidence="1"/>
<dbReference type="EMBL" id="CP000025">
    <property type="protein sequence ID" value="AAW35045.1"/>
    <property type="molecule type" value="Genomic_DNA"/>
</dbReference>
<dbReference type="RefSeq" id="WP_002867788.1">
    <property type="nucleotide sequence ID" value="NC_003912.7"/>
</dbReference>
<dbReference type="SMR" id="Q5HW60"/>
<dbReference type="KEGG" id="cjr:CJE0456"/>
<dbReference type="HOGENOM" id="CLU_013386_1_2_7"/>
<dbReference type="UniPathway" id="UPA00664"/>
<dbReference type="GO" id="GO:0005886">
    <property type="term" value="C:plasma membrane"/>
    <property type="evidence" value="ECO:0007669"/>
    <property type="project" value="UniProtKB-SubCell"/>
</dbReference>
<dbReference type="GO" id="GO:0008961">
    <property type="term" value="F:phosphatidylglycerol-prolipoprotein diacylglyceryl transferase activity"/>
    <property type="evidence" value="ECO:0007669"/>
    <property type="project" value="UniProtKB-UniRule"/>
</dbReference>
<dbReference type="GO" id="GO:0042158">
    <property type="term" value="P:lipoprotein biosynthetic process"/>
    <property type="evidence" value="ECO:0007669"/>
    <property type="project" value="UniProtKB-UniRule"/>
</dbReference>
<dbReference type="HAMAP" id="MF_01147">
    <property type="entry name" value="Lgt"/>
    <property type="match status" value="1"/>
</dbReference>
<dbReference type="InterPro" id="IPR001640">
    <property type="entry name" value="Lgt"/>
</dbReference>
<dbReference type="NCBIfam" id="TIGR00544">
    <property type="entry name" value="lgt"/>
    <property type="match status" value="1"/>
</dbReference>
<dbReference type="PANTHER" id="PTHR30589:SF0">
    <property type="entry name" value="PHOSPHATIDYLGLYCEROL--PROLIPOPROTEIN DIACYLGLYCERYL TRANSFERASE"/>
    <property type="match status" value="1"/>
</dbReference>
<dbReference type="PANTHER" id="PTHR30589">
    <property type="entry name" value="PROLIPOPROTEIN DIACYLGLYCERYL TRANSFERASE"/>
    <property type="match status" value="1"/>
</dbReference>
<dbReference type="Pfam" id="PF01790">
    <property type="entry name" value="LGT"/>
    <property type="match status" value="1"/>
</dbReference>
<dbReference type="PROSITE" id="PS01311">
    <property type="entry name" value="LGT"/>
    <property type="match status" value="1"/>
</dbReference>
<gene>
    <name evidence="1" type="primary">lgt</name>
    <name type="ordered locus">CJE0456</name>
</gene>
<organism>
    <name type="scientific">Campylobacter jejuni (strain RM1221)</name>
    <dbReference type="NCBI Taxonomy" id="195099"/>
    <lineage>
        <taxon>Bacteria</taxon>
        <taxon>Pseudomonadati</taxon>
        <taxon>Campylobacterota</taxon>
        <taxon>Epsilonproteobacteria</taxon>
        <taxon>Campylobacterales</taxon>
        <taxon>Campylobacteraceae</taxon>
        <taxon>Campylobacter</taxon>
    </lineage>
</organism>
<proteinExistence type="inferred from homology"/>